<proteinExistence type="evidence at protein level"/>
<sequence length="511" mass="58319">MSVSALSSTRLPGSFSGFLQAAALLGLLLLLLKAAQLYLRRQWLLRALQQFPCPPSHWLLGHSREFPIDSELQQVLKRVEKFPSACPRWLWGSELFLICYDPDYMKTILGRSDPKARVSYSFLAPWIGYGLLLLEGQTWFQHRRMLTPAFHYDILKPYVGLMVDSVQVMLDKLEKLARKDAPLEIYEHVSLMTLETIMKCAFSHQGSVQLESRTSKSYIQAVRELSDLALQRVRNVFHQSDFLYRLSPEGRLSHRACQLAHEHTDRVIQQRKAQLQQEGELEKVRRKRRLDFLDVLLFAKMENGSSLSDQDLRAEVDTFMFEGHDTTASGISWIFYALATHPEHQHRCREEIQGLLGDGASITWEHLDKMPYTTMCIKEALRLYPPVPGVGSKLSSPVTFPDGRSLPKGIIITLSIYGLHHNPKVWPNPEVFDPSRFAPGSARHSHAFLPFSGGSRNCIGKQFAMNELKVAVALTLVRFELLPDPTRVPIPITRLVLKSKNGIHLRLRKLH</sequence>
<evidence type="ECO:0000250" key="1">
    <source>
        <dbReference type="UniProtKB" id="P51869"/>
    </source>
</evidence>
<evidence type="ECO:0000250" key="2">
    <source>
        <dbReference type="UniProtKB" id="Q02928"/>
    </source>
</evidence>
<evidence type="ECO:0000269" key="3">
    <source>
    </source>
</evidence>
<evidence type="ECO:0000269" key="4">
    <source>
    </source>
</evidence>
<evidence type="ECO:0000305" key="5"/>
<organism>
    <name type="scientific">Oryctolagus cuniculus</name>
    <name type="common">Rabbit</name>
    <dbReference type="NCBI Taxonomy" id="9986"/>
    <lineage>
        <taxon>Eukaryota</taxon>
        <taxon>Metazoa</taxon>
        <taxon>Chordata</taxon>
        <taxon>Craniata</taxon>
        <taxon>Vertebrata</taxon>
        <taxon>Euteleostomi</taxon>
        <taxon>Mammalia</taxon>
        <taxon>Eutheria</taxon>
        <taxon>Euarchontoglires</taxon>
        <taxon>Glires</taxon>
        <taxon>Lagomorpha</taxon>
        <taxon>Leporidae</taxon>
        <taxon>Oryctolagus</taxon>
    </lineage>
</organism>
<keyword id="KW-0903">Direct protein sequencing</keyword>
<keyword id="KW-0256">Endoplasmic reticulum</keyword>
<keyword id="KW-0349">Heme</keyword>
<keyword id="KW-0408">Iron</keyword>
<keyword id="KW-0472">Membrane</keyword>
<keyword id="KW-0479">Metal-binding</keyword>
<keyword id="KW-0492">Microsome</keyword>
<keyword id="KW-0503">Monooxygenase</keyword>
<keyword id="KW-0521">NADP</keyword>
<keyword id="KW-0560">Oxidoreductase</keyword>
<keyword id="KW-1185">Reference proteome</keyword>
<feature type="propeptide" id="PRO_0000003577" evidence="3 4">
    <location>
        <begin position="1"/>
        <end position="4"/>
    </location>
</feature>
<feature type="chain" id="PRO_0000003578" description="Cytochrome P450 4A7">
    <location>
        <begin position="5"/>
        <end position="511"/>
    </location>
</feature>
<feature type="binding site" description="covalent" evidence="1">
    <location>
        <position position="322"/>
    </location>
    <ligand>
        <name>heme</name>
        <dbReference type="ChEBI" id="CHEBI:30413"/>
    </ligand>
</feature>
<feature type="binding site" description="axial binding residue" evidence="1">
    <location>
        <position position="458"/>
    </location>
    <ligand>
        <name>heme</name>
        <dbReference type="ChEBI" id="CHEBI:30413"/>
    </ligand>
    <ligandPart>
        <name>Fe</name>
        <dbReference type="ChEBI" id="CHEBI:18248"/>
    </ligandPart>
</feature>
<feature type="sequence conflict" description="In Ref. 2; AAA31233." evidence="5" ref="2">
    <original>C</original>
    <variation>V</variation>
    <location>
        <position position="99"/>
    </location>
</feature>
<feature type="sequence conflict" description="In Ref. 2; AAA31233." evidence="5" ref="2">
    <original>F</original>
    <variation>S</variation>
    <location>
        <position position="150"/>
    </location>
</feature>
<feature type="sequence conflict" description="In Ref. 2; AAA31233." evidence="5" ref="2">
    <original>SK</original>
    <variation>RQ</variation>
    <location>
        <begin position="392"/>
        <end position="393"/>
    </location>
</feature>
<feature type="sequence conflict" description="In Ref. 2; AAA31233." evidence="5" ref="2">
    <original>V</original>
    <variation>L</variation>
    <location>
        <position position="477"/>
    </location>
</feature>
<name>CP4A7_RABIT</name>
<comment type="function">
    <text>Cytochromes P450 are a group of heme-thiolate monooxygenases. In liver microsomes, this enzyme is involved in an NADPH-dependent electron transport pathway. It oxidizes a variety of structurally unrelated compounds, including steroids, fatty acids, and xenobiotics.</text>
</comment>
<comment type="function">
    <text>The kidney P-450 system is rather specialized for the omega-hydroxylation of fatty acids. Both P450-KA1 and P450-KA2 catalyze the omega- and (omega-1)-hydroxylation of various fatty acids with no drug-metabolizing activity, and hydroxylate prostaglandin A1 and A2 solely at the omega-position.</text>
</comment>
<comment type="catalytic activity">
    <reaction evidence="2">
        <text>an omega-methyl-long-chain fatty acid + reduced [NADPH--hemoprotein reductase] + O2 = an omega-hydroxy-long-chain fatty acid + oxidized [NADPH--hemoprotein reductase] + H2O + H(+)</text>
        <dbReference type="Rhea" id="RHEA:56748"/>
        <dbReference type="Rhea" id="RHEA-COMP:11964"/>
        <dbReference type="Rhea" id="RHEA-COMP:11965"/>
        <dbReference type="ChEBI" id="CHEBI:15377"/>
        <dbReference type="ChEBI" id="CHEBI:15378"/>
        <dbReference type="ChEBI" id="CHEBI:15379"/>
        <dbReference type="ChEBI" id="CHEBI:57618"/>
        <dbReference type="ChEBI" id="CHEBI:58210"/>
        <dbReference type="ChEBI" id="CHEBI:140991"/>
        <dbReference type="ChEBI" id="CHEBI:140992"/>
        <dbReference type="EC" id="1.14.14.80"/>
    </reaction>
</comment>
<comment type="cofactor">
    <cofactor evidence="1">
        <name>heme</name>
        <dbReference type="ChEBI" id="CHEBI:30413"/>
    </cofactor>
</comment>
<comment type="subcellular location">
    <subcellularLocation>
        <location>Endoplasmic reticulum membrane</location>
        <topology>Peripheral membrane protein</topology>
    </subcellularLocation>
    <subcellularLocation>
        <location>Microsome membrane</location>
        <topology>Peripheral membrane protein</topology>
    </subcellularLocation>
</comment>
<comment type="tissue specificity">
    <text>Liver, kidney, small intestine.</text>
</comment>
<comment type="induction">
    <text>P450 can be induced to high levels in liver and other tissues by various foreign compounds, including drugs, pesticides, and carcinogens.</text>
</comment>
<comment type="similarity">
    <text evidence="5">Belongs to the cytochrome P450 family.</text>
</comment>
<accession>P14581</accession>
<gene>
    <name type="primary">CYP4A7</name>
</gene>
<protein>
    <recommendedName>
        <fullName>Cytochrome P450 4A7</fullName>
    </recommendedName>
    <alternativeName>
        <fullName>CYPIVA7</fullName>
    </alternativeName>
    <alternativeName>
        <fullName>Cytochrome P450-KA-2</fullName>
    </alternativeName>
    <alternativeName>
        <fullName>Lauric acid omega-hydroxylase</fullName>
    </alternativeName>
    <alternativeName>
        <fullName>Long-chain fatty acid omega-monooxygenase</fullName>
        <ecNumber evidence="2">1.14.14.80</ecNumber>
    </alternativeName>
</protein>
<reference key="1">
    <citation type="journal article" date="1990" name="Biochemistry">
        <title>Cloning and expression of three rabbit kidney cDNAs encoding lauric acid omega-hydroxylases.</title>
        <authorList>
            <person name="Johnson E.F."/>
            <person name="Walker D.L."/>
            <person name="Griffin K.J."/>
            <person name="Clark J.E."/>
            <person name="Okita R.T."/>
            <person name="Meurhoff A.S."/>
            <person name="Masters B.S.S."/>
        </authorList>
    </citation>
    <scope>NUCLEOTIDE SEQUENCE [MRNA]</scope>
    <source>
        <tissue>Kidney</tissue>
    </source>
</reference>
<reference key="2">
    <citation type="journal article" date="1989" name="J. Biol. Chem.">
        <title>Two forms of omega-hydroxylase toward prostaglandin A and laurate. cDNA cloning and their expression.</title>
        <authorList>
            <person name="Yokotani N."/>
            <person name="Bernhardt R."/>
            <person name="Sogawa K."/>
            <person name="Kusunose E."/>
            <person name="Gotoh O."/>
            <person name="Kusunose M."/>
            <person name="Fujii-Kuriyama Y."/>
        </authorList>
    </citation>
    <scope>NUCLEOTIDE SEQUENCE [MRNA]</scope>
    <scope>PROTEIN SEQUENCE OF 5-24</scope>
    <source>
        <tissue>Kidney</tissue>
    </source>
</reference>
<reference key="3">
    <citation type="journal article" date="1990" name="J. Biochem.">
        <title>Purification and characterization of two forms of fatty acid omega-hydroxylase cytochrome P-450 from rabbit kidney cortex microsomes.</title>
        <authorList>
            <person name="Yoshimura R."/>
            <person name="Kusunose E."/>
            <person name="Yokotani N."/>
            <person name="Yamamoto S."/>
            <person name="Kubota I."/>
            <person name="Kusunose M."/>
        </authorList>
    </citation>
    <scope>PROTEIN SEQUENCE OF 5-24</scope>
    <source>
        <tissue>Kidney</tissue>
    </source>
</reference>
<dbReference type="EC" id="1.14.14.80" evidence="2"/>
<dbReference type="EMBL" id="M28657">
    <property type="protein sequence ID" value="AAA31231.1"/>
    <property type="molecule type" value="mRNA"/>
</dbReference>
<dbReference type="EMBL" id="M29530">
    <property type="protein sequence ID" value="AAA31233.1"/>
    <property type="molecule type" value="mRNA"/>
</dbReference>
<dbReference type="PIR" id="B34160">
    <property type="entry name" value="B34160"/>
</dbReference>
<dbReference type="RefSeq" id="NP_001164541.1">
    <property type="nucleotide sequence ID" value="NM_001171070.1"/>
</dbReference>
<dbReference type="SMR" id="P14581"/>
<dbReference type="FunCoup" id="P14581">
    <property type="interactions" value="157"/>
</dbReference>
<dbReference type="STRING" id="9986.ENSOCUP00000047099"/>
<dbReference type="GeneID" id="100328944"/>
<dbReference type="KEGG" id="ocu:100328944"/>
<dbReference type="CTD" id="100328944"/>
<dbReference type="InParanoid" id="P14581"/>
<dbReference type="OrthoDB" id="1470350at2759"/>
<dbReference type="Proteomes" id="UP000001811">
    <property type="component" value="Unplaced"/>
</dbReference>
<dbReference type="GO" id="GO:0005789">
    <property type="term" value="C:endoplasmic reticulum membrane"/>
    <property type="evidence" value="ECO:0007669"/>
    <property type="project" value="UniProtKB-SubCell"/>
</dbReference>
<dbReference type="GO" id="GO:0020037">
    <property type="term" value="F:heme binding"/>
    <property type="evidence" value="ECO:0007669"/>
    <property type="project" value="InterPro"/>
</dbReference>
<dbReference type="GO" id="GO:0005506">
    <property type="term" value="F:iron ion binding"/>
    <property type="evidence" value="ECO:0007669"/>
    <property type="project" value="InterPro"/>
</dbReference>
<dbReference type="GO" id="GO:0102033">
    <property type="term" value="F:long-chain fatty acid omega-hydroxylase activity"/>
    <property type="evidence" value="ECO:0007669"/>
    <property type="project" value="UniProtKB-EC"/>
</dbReference>
<dbReference type="GO" id="GO:0006629">
    <property type="term" value="P:lipid metabolic process"/>
    <property type="evidence" value="ECO:0007669"/>
    <property type="project" value="UniProtKB-ARBA"/>
</dbReference>
<dbReference type="CDD" id="cd20678">
    <property type="entry name" value="CYP4B-like"/>
    <property type="match status" value="1"/>
</dbReference>
<dbReference type="FunFam" id="1.10.630.10:FF:000005">
    <property type="entry name" value="cytochrome P450 4F22 isoform X2"/>
    <property type="match status" value="1"/>
</dbReference>
<dbReference type="Gene3D" id="1.10.630.10">
    <property type="entry name" value="Cytochrome P450"/>
    <property type="match status" value="1"/>
</dbReference>
<dbReference type="InterPro" id="IPR001128">
    <property type="entry name" value="Cyt_P450"/>
</dbReference>
<dbReference type="InterPro" id="IPR017972">
    <property type="entry name" value="Cyt_P450_CS"/>
</dbReference>
<dbReference type="InterPro" id="IPR002401">
    <property type="entry name" value="Cyt_P450_E_grp-I"/>
</dbReference>
<dbReference type="InterPro" id="IPR036396">
    <property type="entry name" value="Cyt_P450_sf"/>
</dbReference>
<dbReference type="InterPro" id="IPR050196">
    <property type="entry name" value="Cytochrome_P450_Monoox"/>
</dbReference>
<dbReference type="PANTHER" id="PTHR24291:SF39">
    <property type="entry name" value="CYTOCHROME P450 4A11-RELATED"/>
    <property type="match status" value="1"/>
</dbReference>
<dbReference type="PANTHER" id="PTHR24291">
    <property type="entry name" value="CYTOCHROME P450 FAMILY 4"/>
    <property type="match status" value="1"/>
</dbReference>
<dbReference type="Pfam" id="PF00067">
    <property type="entry name" value="p450"/>
    <property type="match status" value="1"/>
</dbReference>
<dbReference type="PRINTS" id="PR00463">
    <property type="entry name" value="EP450I"/>
</dbReference>
<dbReference type="PRINTS" id="PR00385">
    <property type="entry name" value="P450"/>
</dbReference>
<dbReference type="SUPFAM" id="SSF48264">
    <property type="entry name" value="Cytochrome P450"/>
    <property type="match status" value="1"/>
</dbReference>
<dbReference type="PROSITE" id="PS00086">
    <property type="entry name" value="CYTOCHROME_P450"/>
    <property type="match status" value="1"/>
</dbReference>